<sequence length="178" mass="21117">MPKAKGKTRRQKFGYNVNRKRLNRNARRKAAPRIECSHIRHAWDHTKSVRQNLAEMGLAMDPNKAVPLRKRKVKAMEVDTEERPKDLVRKPYVVNDLEAEASLPEKKGNTLSRDLIDYVHYMVENHGEDYKAMARDEKNYYQDTPKQIRNKINVYKRFYPTEWQVFVASLQNKKMEVD</sequence>
<proteinExistence type="evidence at transcript level"/>
<name>NOP16_RAT</name>
<protein>
    <recommendedName>
        <fullName>Nucleolar protein 16</fullName>
    </recommendedName>
    <alternativeName>
        <fullName>Protein ZH1</fullName>
    </alternativeName>
</protein>
<comment type="subcellular location">
    <subcellularLocation>
        <location evidence="1">Nucleus</location>
        <location evidence="1">Nucleolus</location>
    </subcellularLocation>
</comment>
<comment type="similarity">
    <text evidence="4">Belongs to the NOP16 family.</text>
</comment>
<gene>
    <name type="primary">Nop16</name>
</gene>
<reference key="1">
    <citation type="submission" date="2006-04" db="EMBL/GenBank/DDBJ databases">
        <title>Further study on the effects of different TCM treatments on liver cancer. Constructing a rat liver cDNA library and screening and analyzing of some differently expressed genes.</title>
        <authorList>
            <person name="Zhang H."/>
            <person name="Fang Z."/>
            <person name="Guan D."/>
            <person name="Wu Z."/>
            <person name="Zhu X."/>
            <person name="Pan Z."/>
            <person name="Liang C."/>
        </authorList>
    </citation>
    <scope>NUCLEOTIDE SEQUENCE [MRNA]</scope>
    <source>
        <strain>Wistar</strain>
    </source>
</reference>
<keyword id="KW-0007">Acetylation</keyword>
<keyword id="KW-1017">Isopeptide bond</keyword>
<keyword id="KW-0539">Nucleus</keyword>
<keyword id="KW-0597">Phosphoprotein</keyword>
<keyword id="KW-1185">Reference proteome</keyword>
<keyword id="KW-0832">Ubl conjugation</keyword>
<evidence type="ECO:0000250" key="1"/>
<evidence type="ECO:0000250" key="2">
    <source>
        <dbReference type="UniProtKB" id="Q9Y3C1"/>
    </source>
</evidence>
<evidence type="ECO:0000256" key="3">
    <source>
        <dbReference type="SAM" id="MobiDB-lite"/>
    </source>
</evidence>
<evidence type="ECO:0000305" key="4"/>
<accession>Q1RP77</accession>
<organism>
    <name type="scientific">Rattus norvegicus</name>
    <name type="common">Rat</name>
    <dbReference type="NCBI Taxonomy" id="10116"/>
    <lineage>
        <taxon>Eukaryota</taxon>
        <taxon>Metazoa</taxon>
        <taxon>Chordata</taxon>
        <taxon>Craniata</taxon>
        <taxon>Vertebrata</taxon>
        <taxon>Euteleostomi</taxon>
        <taxon>Mammalia</taxon>
        <taxon>Eutheria</taxon>
        <taxon>Euarchontoglires</taxon>
        <taxon>Glires</taxon>
        <taxon>Rodentia</taxon>
        <taxon>Myomorpha</taxon>
        <taxon>Muroidea</taxon>
        <taxon>Muridae</taxon>
        <taxon>Murinae</taxon>
        <taxon>Rattus</taxon>
    </lineage>
</organism>
<dbReference type="EMBL" id="AM258958">
    <property type="protein sequence ID" value="CAJ88854.1"/>
    <property type="molecule type" value="mRNA"/>
</dbReference>
<dbReference type="EMBL" id="AB256043">
    <property type="protein sequence ID" value="BAE94253.1"/>
    <property type="molecule type" value="mRNA"/>
</dbReference>
<dbReference type="RefSeq" id="NP_001040560.1">
    <property type="nucleotide sequence ID" value="NM_001047095.1"/>
</dbReference>
<dbReference type="SMR" id="Q1RP77"/>
<dbReference type="FunCoup" id="Q1RP77">
    <property type="interactions" value="2261"/>
</dbReference>
<dbReference type="STRING" id="10116.ENSRNOP00000023320"/>
<dbReference type="iPTMnet" id="Q1RP77"/>
<dbReference type="PhosphoSitePlus" id="Q1RP77"/>
<dbReference type="PaxDb" id="10116-ENSRNOP00000023320"/>
<dbReference type="Ensembl" id="ENSRNOT00000023320.8">
    <property type="protein sequence ID" value="ENSRNOP00000023320.4"/>
    <property type="gene ID" value="ENSRNOG00000017284.8"/>
</dbReference>
<dbReference type="GeneID" id="306768"/>
<dbReference type="KEGG" id="rno:306768"/>
<dbReference type="UCSC" id="RGD:1305727">
    <property type="organism name" value="rat"/>
</dbReference>
<dbReference type="AGR" id="RGD:1305727"/>
<dbReference type="CTD" id="51491"/>
<dbReference type="RGD" id="1305727">
    <property type="gene designation" value="Nop16"/>
</dbReference>
<dbReference type="eggNOG" id="KOG4706">
    <property type="taxonomic scope" value="Eukaryota"/>
</dbReference>
<dbReference type="GeneTree" id="ENSGT00390000003426"/>
<dbReference type="HOGENOM" id="CLU_115103_0_0_1"/>
<dbReference type="InParanoid" id="Q1RP77"/>
<dbReference type="OMA" id="IDYVKHM"/>
<dbReference type="OrthoDB" id="285729at2759"/>
<dbReference type="PhylomeDB" id="Q1RP77"/>
<dbReference type="TreeFam" id="TF323541"/>
<dbReference type="PRO" id="PR:Q1RP77"/>
<dbReference type="Proteomes" id="UP000002494">
    <property type="component" value="Chromosome 17"/>
</dbReference>
<dbReference type="Bgee" id="ENSRNOG00000017284">
    <property type="expression patterns" value="Expressed in pancreas and 20 other cell types or tissues"/>
</dbReference>
<dbReference type="ExpressionAtlas" id="Q1RP77">
    <property type="expression patterns" value="baseline and differential"/>
</dbReference>
<dbReference type="GO" id="GO:0005730">
    <property type="term" value="C:nucleolus"/>
    <property type="evidence" value="ECO:0000318"/>
    <property type="project" value="GO_Central"/>
</dbReference>
<dbReference type="GO" id="GO:0005654">
    <property type="term" value="C:nucleoplasm"/>
    <property type="evidence" value="ECO:0007669"/>
    <property type="project" value="Ensembl"/>
</dbReference>
<dbReference type="GO" id="GO:0042273">
    <property type="term" value="P:ribosomal large subunit biogenesis"/>
    <property type="evidence" value="ECO:0000318"/>
    <property type="project" value="GO_Central"/>
</dbReference>
<dbReference type="InterPro" id="IPR019002">
    <property type="entry name" value="Ribosome_biogenesis_Nop16"/>
</dbReference>
<dbReference type="PANTHER" id="PTHR13243">
    <property type="entry name" value="HSPC111 PROTEIN-RELATED"/>
    <property type="match status" value="1"/>
</dbReference>
<dbReference type="PANTHER" id="PTHR13243:SF1">
    <property type="entry name" value="NUCLEOLAR PROTEIN 16"/>
    <property type="match status" value="1"/>
</dbReference>
<dbReference type="Pfam" id="PF09420">
    <property type="entry name" value="Nop16"/>
    <property type="match status" value="2"/>
</dbReference>
<feature type="chain" id="PRO_0000250159" description="Nucleolar protein 16">
    <location>
        <begin position="1"/>
        <end position="178"/>
    </location>
</feature>
<feature type="region of interest" description="Disordered" evidence="3">
    <location>
        <begin position="1"/>
        <end position="31"/>
    </location>
</feature>
<feature type="modified residue" description="Phosphothreonine" evidence="2">
    <location>
        <position position="8"/>
    </location>
</feature>
<feature type="modified residue" description="N6-acetyllysine" evidence="2">
    <location>
        <position position="90"/>
    </location>
</feature>
<feature type="modified residue" description="Phosphothreonine" evidence="2">
    <location>
        <position position="144"/>
    </location>
</feature>
<feature type="cross-link" description="Glycyl lysine isopeptide (Lys-Gly) (interchain with G-Cter in SUMO2)" evidence="2">
    <location>
        <position position="74"/>
    </location>
</feature>